<feature type="chain" id="PRO_0000002245" description="Arginine biosynthesis bifunctional protein ArgJ alpha chain 1" evidence="1">
    <location>
        <begin position="1"/>
        <end position="178"/>
    </location>
</feature>
<feature type="chain" id="PRO_0000002246" description="Arginine biosynthesis bifunctional protein ArgJ beta chain 1" evidence="1">
    <location>
        <begin position="179"/>
        <end position="383"/>
    </location>
</feature>
<feature type="region of interest" description="Disordered" evidence="2">
    <location>
        <begin position="1"/>
        <end position="25"/>
    </location>
</feature>
<feature type="active site" description="Nucleophile" evidence="1">
    <location>
        <position position="179"/>
    </location>
</feature>
<feature type="binding site" evidence="1">
    <location>
        <position position="146"/>
    </location>
    <ligand>
        <name>substrate</name>
    </ligand>
</feature>
<feature type="binding site" evidence="1">
    <location>
        <position position="168"/>
    </location>
    <ligand>
        <name>substrate</name>
    </ligand>
</feature>
<feature type="binding site" evidence="1">
    <location>
        <position position="179"/>
    </location>
    <ligand>
        <name>substrate</name>
    </ligand>
</feature>
<feature type="binding site" evidence="1">
    <location>
        <position position="259"/>
    </location>
    <ligand>
        <name>substrate</name>
    </ligand>
</feature>
<feature type="binding site" evidence="1">
    <location>
        <position position="378"/>
    </location>
    <ligand>
        <name>substrate</name>
    </ligand>
</feature>
<feature type="binding site" evidence="1">
    <location>
        <position position="383"/>
    </location>
    <ligand>
        <name>substrate</name>
    </ligand>
</feature>
<feature type="site" description="Involved in the stabilization of negative charge on the oxyanion by the formation of the oxyanion hole" evidence="1">
    <location>
        <position position="109"/>
    </location>
</feature>
<feature type="site" description="Involved in the stabilization of negative charge on the oxyanion by the formation of the oxyanion hole" evidence="1">
    <location>
        <position position="110"/>
    </location>
</feature>
<feature type="site" description="Cleavage; by autolysis" evidence="1">
    <location>
        <begin position="178"/>
        <end position="179"/>
    </location>
</feature>
<name>ARGJ1_STRCL</name>
<proteinExistence type="inferred from homology"/>
<organism>
    <name type="scientific">Streptomyces clavuligerus</name>
    <dbReference type="NCBI Taxonomy" id="1901"/>
    <lineage>
        <taxon>Bacteria</taxon>
        <taxon>Bacillati</taxon>
        <taxon>Actinomycetota</taxon>
        <taxon>Actinomycetes</taxon>
        <taxon>Kitasatosporales</taxon>
        <taxon>Streptomycetaceae</taxon>
        <taxon>Streptomyces</taxon>
    </lineage>
</organism>
<protein>
    <recommendedName>
        <fullName evidence="1">Arginine biosynthesis bifunctional protein ArgJ 1</fullName>
    </recommendedName>
    <domain>
        <recommendedName>
            <fullName evidence="1">Glutamate N-acetyltransferase 1</fullName>
            <ecNumber evidence="1">2.3.1.35</ecNumber>
        </recommendedName>
        <alternativeName>
            <fullName evidence="1">Ornithine acetyltransferase 1</fullName>
            <shortName evidence="1">OATase 1</shortName>
        </alternativeName>
        <alternativeName>
            <fullName evidence="1">Ornithine transacetylase 1</fullName>
        </alternativeName>
    </domain>
    <domain>
        <recommendedName>
            <fullName evidence="1">Amino-acid acetyltransferase 1</fullName>
            <ecNumber evidence="1">2.3.1.1</ecNumber>
        </recommendedName>
        <alternativeName>
            <fullName evidence="1">N-acetylglutamate synthase 1</fullName>
            <shortName evidence="1">AGSase 1</shortName>
        </alternativeName>
    </domain>
    <component>
        <recommendedName>
            <fullName evidence="1">Arginine biosynthesis bifunctional protein ArgJ alpha chain 1</fullName>
        </recommendedName>
    </component>
    <component>
        <recommendedName>
            <fullName evidence="1">Arginine biosynthesis bifunctional protein ArgJ beta chain 1</fullName>
        </recommendedName>
    </component>
</protein>
<keyword id="KW-0012">Acyltransferase</keyword>
<keyword id="KW-0028">Amino-acid biosynthesis</keyword>
<keyword id="KW-0055">Arginine biosynthesis</keyword>
<keyword id="KW-0068">Autocatalytic cleavage</keyword>
<keyword id="KW-0963">Cytoplasm</keyword>
<keyword id="KW-0511">Multifunctional enzyme</keyword>
<keyword id="KW-0808">Transferase</keyword>
<dbReference type="EC" id="2.3.1.35" evidence="1"/>
<dbReference type="EC" id="2.3.1.1" evidence="1"/>
<dbReference type="EMBL" id="Z49111">
    <property type="protein sequence ID" value="CAB82480.1"/>
    <property type="molecule type" value="Genomic_DNA"/>
</dbReference>
<dbReference type="SMR" id="Q9LCS7"/>
<dbReference type="STRING" id="1901.BB341_23945"/>
<dbReference type="eggNOG" id="COG1364">
    <property type="taxonomic scope" value="Bacteria"/>
</dbReference>
<dbReference type="SABIO-RK" id="Q9LCS7"/>
<dbReference type="UniPathway" id="UPA00068">
    <property type="reaction ID" value="UER00106"/>
</dbReference>
<dbReference type="UniPathway" id="UPA00068">
    <property type="reaction ID" value="UER00111"/>
</dbReference>
<dbReference type="GO" id="GO:0005737">
    <property type="term" value="C:cytoplasm"/>
    <property type="evidence" value="ECO:0007669"/>
    <property type="project" value="UniProtKB-SubCell"/>
</dbReference>
<dbReference type="GO" id="GO:0004358">
    <property type="term" value="F:glutamate N-acetyltransferase activity"/>
    <property type="evidence" value="ECO:0007669"/>
    <property type="project" value="UniProtKB-UniRule"/>
</dbReference>
<dbReference type="GO" id="GO:0004042">
    <property type="term" value="F:L-glutamate N-acetyltransferase activity"/>
    <property type="evidence" value="ECO:0007669"/>
    <property type="project" value="UniProtKB-UniRule"/>
</dbReference>
<dbReference type="GO" id="GO:0006526">
    <property type="term" value="P:L-arginine biosynthetic process"/>
    <property type="evidence" value="ECO:0007669"/>
    <property type="project" value="UniProtKB-UniRule"/>
</dbReference>
<dbReference type="GO" id="GO:0006592">
    <property type="term" value="P:ornithine biosynthetic process"/>
    <property type="evidence" value="ECO:0007669"/>
    <property type="project" value="TreeGrafter"/>
</dbReference>
<dbReference type="CDD" id="cd02152">
    <property type="entry name" value="OAT"/>
    <property type="match status" value="1"/>
</dbReference>
<dbReference type="FunFam" id="3.10.20.340:FF:000003">
    <property type="entry name" value="Arginine biosynthesis bifunctional protein ArgJ"/>
    <property type="match status" value="1"/>
</dbReference>
<dbReference type="Gene3D" id="3.10.20.340">
    <property type="entry name" value="ArgJ beta chain, C-terminal domain"/>
    <property type="match status" value="1"/>
</dbReference>
<dbReference type="Gene3D" id="3.60.70.12">
    <property type="entry name" value="L-amino peptidase D-ALA esterase/amidase"/>
    <property type="match status" value="1"/>
</dbReference>
<dbReference type="HAMAP" id="MF_01106">
    <property type="entry name" value="ArgJ"/>
    <property type="match status" value="1"/>
</dbReference>
<dbReference type="InterPro" id="IPR002813">
    <property type="entry name" value="Arg_biosynth_ArgJ"/>
</dbReference>
<dbReference type="InterPro" id="IPR016117">
    <property type="entry name" value="ArgJ-like_dom_sf"/>
</dbReference>
<dbReference type="InterPro" id="IPR042195">
    <property type="entry name" value="ArgJ_beta_C"/>
</dbReference>
<dbReference type="NCBIfam" id="TIGR00120">
    <property type="entry name" value="ArgJ"/>
    <property type="match status" value="1"/>
</dbReference>
<dbReference type="NCBIfam" id="NF003802">
    <property type="entry name" value="PRK05388.1"/>
    <property type="match status" value="1"/>
</dbReference>
<dbReference type="PANTHER" id="PTHR23100">
    <property type="entry name" value="ARGININE BIOSYNTHESIS BIFUNCTIONAL PROTEIN ARGJ"/>
    <property type="match status" value="1"/>
</dbReference>
<dbReference type="PANTHER" id="PTHR23100:SF0">
    <property type="entry name" value="ARGININE BIOSYNTHESIS BIFUNCTIONAL PROTEIN ARGJ, MITOCHONDRIAL"/>
    <property type="match status" value="1"/>
</dbReference>
<dbReference type="Pfam" id="PF01960">
    <property type="entry name" value="ArgJ"/>
    <property type="match status" value="1"/>
</dbReference>
<dbReference type="SUPFAM" id="SSF56266">
    <property type="entry name" value="DmpA/ArgJ-like"/>
    <property type="match status" value="1"/>
</dbReference>
<comment type="function">
    <text evidence="1">Catalyzes two activities which are involved in the cyclic version of arginine biosynthesis: the synthesis of N-acetylglutamate from glutamate and acetyl-CoA as the acetyl donor, and of ornithine by transacetylation between N(2)-acetylornithine and glutamate.</text>
</comment>
<comment type="catalytic activity">
    <reaction evidence="1">
        <text>N(2)-acetyl-L-ornithine + L-glutamate = N-acetyl-L-glutamate + L-ornithine</text>
        <dbReference type="Rhea" id="RHEA:15349"/>
        <dbReference type="ChEBI" id="CHEBI:29985"/>
        <dbReference type="ChEBI" id="CHEBI:44337"/>
        <dbReference type="ChEBI" id="CHEBI:46911"/>
        <dbReference type="ChEBI" id="CHEBI:57805"/>
        <dbReference type="EC" id="2.3.1.35"/>
    </reaction>
</comment>
<comment type="catalytic activity">
    <reaction evidence="1">
        <text>L-glutamate + acetyl-CoA = N-acetyl-L-glutamate + CoA + H(+)</text>
        <dbReference type="Rhea" id="RHEA:24292"/>
        <dbReference type="ChEBI" id="CHEBI:15378"/>
        <dbReference type="ChEBI" id="CHEBI:29985"/>
        <dbReference type="ChEBI" id="CHEBI:44337"/>
        <dbReference type="ChEBI" id="CHEBI:57287"/>
        <dbReference type="ChEBI" id="CHEBI:57288"/>
        <dbReference type="EC" id="2.3.1.1"/>
    </reaction>
</comment>
<comment type="pathway">
    <text evidence="1">Amino-acid biosynthesis; L-arginine biosynthesis; L-ornithine and N-acetyl-L-glutamate from L-glutamate and N(2)-acetyl-L-ornithine (cyclic): step 1/1.</text>
</comment>
<comment type="pathway">
    <text evidence="1">Amino-acid biosynthesis; L-arginine biosynthesis; N(2)-acetyl-L-ornithine from L-glutamate: step 1/4.</text>
</comment>
<comment type="subunit">
    <text evidence="1">Heterotetramer of two alpha and two beta chains.</text>
</comment>
<comment type="subcellular location">
    <subcellularLocation>
        <location evidence="1">Cytoplasm</location>
    </subcellularLocation>
</comment>
<comment type="similarity">
    <text evidence="1">Belongs to the ArgJ family.</text>
</comment>
<accession>Q9LCS7</accession>
<gene>
    <name evidence="1" type="primary">argJ1</name>
</gene>
<sequence length="383" mass="39729">MTVTAPKGSTGGGCRRGSKESGQPDLALVVNEGPRRAAAGVFTANRVKAAPVLWSQQVLRGGEVSAVVLNSGGANACTGPKGFQDTHATAERAAAALGHSAAEIAVASTGLIGTYLPMDRLLPGIDKAAAELSPHGGERAAIAIRTTDTVHKTAVRAGEGWSVGGMAKGAGMLAPGLATLLVVLTTDADLAPPVLDKAVRDAVRTTFERVDSDGCMSTNDTVLLLASGASGGDPGYEEFADVLREVCEDLARKLIGDAEGASKDIRIEVIHAATEDDAVEVGRTIARNNLLKCAIHGEDPNWGRVLSAIGTTKAVFEPERLNVAINGVWVCREGSAGDGRDLVDMRFREVRITADLDAGTHSAVIWANDLTAEYVHENSAYSS</sequence>
<evidence type="ECO:0000255" key="1">
    <source>
        <dbReference type="HAMAP-Rule" id="MF_01106"/>
    </source>
</evidence>
<evidence type="ECO:0000256" key="2">
    <source>
        <dbReference type="SAM" id="MobiDB-lite"/>
    </source>
</evidence>
<reference key="1">
    <citation type="journal article" date="1995" name="Gene">
        <title>The argG gene of Streptomyces clavuligerus has low homology to unstable argG from other actinomycetes: effect of amplification on clavulanic acid biosynthesis.</title>
        <authorList>
            <person name="Rodriguez-Garcia A."/>
            <person name="Martin J.F."/>
            <person name="Liras P."/>
        </authorList>
    </citation>
    <scope>NUCLEOTIDE SEQUENCE [GENOMIC DNA]</scope>
    <source>
        <strain>ATCC 27064 / DSM 738 / JCM 4710 / NBRC 13307 / NCIMB 12785 / NRRL 3585 / VKM Ac-602</strain>
    </source>
</reference>